<sequence>MNVTFLGTSSGVPTLTRNVSSLALKLSQTAEVWLFDCGEGTQHQLMKSNIKSSQIKKIFITHMHGDHIYGLPGLLATLGLSGNSNGIELYGPSELKFFVLSALKSSYCKLSFPLRFKEVEDKASFNKILFENDKLKVHCACLKHRLPAYGYRVSEKDKPGIFDIKKATDLNIPPGPIYSELQAGKTVKLKDGRSFNGQEFCGPPRKGESFVYCTDTVFSESAINLSKNADLLVHESTFSKEDEKMAYEKLHSTTIMAAKTALLANAKKLIITHISPRYTQKSLIKPSTLLLEAQKIFPNTYLAKDFLTAKIK</sequence>
<accession>A2BY56</accession>
<comment type="function">
    <text evidence="1">Zinc phosphodiesterase, which displays some tRNA 3'-processing endonuclease activity. Probably involved in tRNA maturation, by removing a 3'-trailer from precursor tRNA.</text>
</comment>
<comment type="catalytic activity">
    <reaction evidence="1">
        <text>Endonucleolytic cleavage of RNA, removing extra 3' nucleotides from tRNA precursor, generating 3' termini of tRNAs. A 3'-hydroxy group is left at the tRNA terminus and a 5'-phosphoryl group is left at the trailer molecule.</text>
        <dbReference type="EC" id="3.1.26.11"/>
    </reaction>
</comment>
<comment type="cofactor">
    <cofactor evidence="1">
        <name>Zn(2+)</name>
        <dbReference type="ChEBI" id="CHEBI:29105"/>
    </cofactor>
    <text evidence="1">Binds 2 Zn(2+) ions.</text>
</comment>
<comment type="subunit">
    <text evidence="1">Homodimer.</text>
</comment>
<comment type="similarity">
    <text evidence="1">Belongs to the RNase Z family.</text>
</comment>
<proteinExistence type="inferred from homology"/>
<feature type="chain" id="PRO_1000070317" description="Ribonuclease Z">
    <location>
        <begin position="1"/>
        <end position="312"/>
    </location>
</feature>
<feature type="active site" description="Proton acceptor" evidence="1">
    <location>
        <position position="66"/>
    </location>
</feature>
<feature type="binding site" evidence="1">
    <location>
        <position position="62"/>
    </location>
    <ligand>
        <name>Zn(2+)</name>
        <dbReference type="ChEBI" id="CHEBI:29105"/>
        <label>1</label>
        <note>catalytic</note>
    </ligand>
</feature>
<feature type="binding site" evidence="1">
    <location>
        <position position="64"/>
    </location>
    <ligand>
        <name>Zn(2+)</name>
        <dbReference type="ChEBI" id="CHEBI:29105"/>
        <label>1</label>
        <note>catalytic</note>
    </ligand>
</feature>
<feature type="binding site" evidence="1">
    <location>
        <position position="66"/>
    </location>
    <ligand>
        <name>Zn(2+)</name>
        <dbReference type="ChEBI" id="CHEBI:29105"/>
        <label>2</label>
        <note>catalytic</note>
    </ligand>
</feature>
<feature type="binding site" evidence="1">
    <location>
        <position position="67"/>
    </location>
    <ligand>
        <name>Zn(2+)</name>
        <dbReference type="ChEBI" id="CHEBI:29105"/>
        <label>2</label>
        <note>catalytic</note>
    </ligand>
</feature>
<feature type="binding site" evidence="1">
    <location>
        <position position="144"/>
    </location>
    <ligand>
        <name>Zn(2+)</name>
        <dbReference type="ChEBI" id="CHEBI:29105"/>
        <label>1</label>
        <note>catalytic</note>
    </ligand>
</feature>
<feature type="binding site" evidence="1">
    <location>
        <position position="215"/>
    </location>
    <ligand>
        <name>Zn(2+)</name>
        <dbReference type="ChEBI" id="CHEBI:29105"/>
        <label>1</label>
        <note>catalytic</note>
    </ligand>
</feature>
<feature type="binding site" evidence="1">
    <location>
        <position position="215"/>
    </location>
    <ligand>
        <name>Zn(2+)</name>
        <dbReference type="ChEBI" id="CHEBI:29105"/>
        <label>2</label>
        <note>catalytic</note>
    </ligand>
</feature>
<feature type="binding site" evidence="1">
    <location>
        <position position="273"/>
    </location>
    <ligand>
        <name>Zn(2+)</name>
        <dbReference type="ChEBI" id="CHEBI:29105"/>
        <label>2</label>
        <note>catalytic</note>
    </ligand>
</feature>
<organism>
    <name type="scientific">Prochlorococcus marinus (strain MIT 9515)</name>
    <dbReference type="NCBI Taxonomy" id="167542"/>
    <lineage>
        <taxon>Bacteria</taxon>
        <taxon>Bacillati</taxon>
        <taxon>Cyanobacteriota</taxon>
        <taxon>Cyanophyceae</taxon>
        <taxon>Synechococcales</taxon>
        <taxon>Prochlorococcaceae</taxon>
        <taxon>Prochlorococcus</taxon>
    </lineage>
</organism>
<name>RNZ_PROM5</name>
<evidence type="ECO:0000255" key="1">
    <source>
        <dbReference type="HAMAP-Rule" id="MF_01818"/>
    </source>
</evidence>
<dbReference type="EC" id="3.1.26.11" evidence="1"/>
<dbReference type="EMBL" id="CP000552">
    <property type="protein sequence ID" value="ABM72717.1"/>
    <property type="molecule type" value="Genomic_DNA"/>
</dbReference>
<dbReference type="RefSeq" id="WP_011820813.1">
    <property type="nucleotide sequence ID" value="NC_008817.1"/>
</dbReference>
<dbReference type="SMR" id="A2BY56"/>
<dbReference type="STRING" id="167542.P9515_15101"/>
<dbReference type="GeneID" id="60200670"/>
<dbReference type="KEGG" id="pmc:P9515_15101"/>
<dbReference type="eggNOG" id="COG1234">
    <property type="taxonomic scope" value="Bacteria"/>
</dbReference>
<dbReference type="HOGENOM" id="CLU_031317_2_0_3"/>
<dbReference type="OrthoDB" id="9800940at2"/>
<dbReference type="Proteomes" id="UP000001589">
    <property type="component" value="Chromosome"/>
</dbReference>
<dbReference type="GO" id="GO:0042781">
    <property type="term" value="F:3'-tRNA processing endoribonuclease activity"/>
    <property type="evidence" value="ECO:0007669"/>
    <property type="project" value="UniProtKB-UniRule"/>
</dbReference>
<dbReference type="GO" id="GO:0008270">
    <property type="term" value="F:zinc ion binding"/>
    <property type="evidence" value="ECO:0007669"/>
    <property type="project" value="UniProtKB-UniRule"/>
</dbReference>
<dbReference type="CDD" id="cd07717">
    <property type="entry name" value="RNaseZ_ZiPD-like_MBL-fold"/>
    <property type="match status" value="1"/>
</dbReference>
<dbReference type="FunFam" id="3.60.15.10:FF:000002">
    <property type="entry name" value="Ribonuclease Z"/>
    <property type="match status" value="1"/>
</dbReference>
<dbReference type="Gene3D" id="3.60.15.10">
    <property type="entry name" value="Ribonuclease Z/Hydroxyacylglutathione hydrolase-like"/>
    <property type="match status" value="1"/>
</dbReference>
<dbReference type="HAMAP" id="MF_01818">
    <property type="entry name" value="RNase_Z_BN"/>
    <property type="match status" value="1"/>
</dbReference>
<dbReference type="InterPro" id="IPR001279">
    <property type="entry name" value="Metallo-B-lactamas"/>
</dbReference>
<dbReference type="InterPro" id="IPR036866">
    <property type="entry name" value="RibonucZ/Hydroxyglut_hydro"/>
</dbReference>
<dbReference type="InterPro" id="IPR013471">
    <property type="entry name" value="RNase_Z/BN"/>
</dbReference>
<dbReference type="NCBIfam" id="NF000801">
    <property type="entry name" value="PRK00055.1-3"/>
    <property type="match status" value="1"/>
</dbReference>
<dbReference type="NCBIfam" id="TIGR02651">
    <property type="entry name" value="RNase_Z"/>
    <property type="match status" value="1"/>
</dbReference>
<dbReference type="PANTHER" id="PTHR46018">
    <property type="entry name" value="ZINC PHOSPHODIESTERASE ELAC PROTEIN 1"/>
    <property type="match status" value="1"/>
</dbReference>
<dbReference type="PANTHER" id="PTHR46018:SF2">
    <property type="entry name" value="ZINC PHOSPHODIESTERASE ELAC PROTEIN 1"/>
    <property type="match status" value="1"/>
</dbReference>
<dbReference type="Pfam" id="PF00753">
    <property type="entry name" value="Lactamase_B"/>
    <property type="match status" value="1"/>
</dbReference>
<dbReference type="Pfam" id="PF12706">
    <property type="entry name" value="Lactamase_B_2"/>
    <property type="match status" value="1"/>
</dbReference>
<dbReference type="SUPFAM" id="SSF56281">
    <property type="entry name" value="Metallo-hydrolase/oxidoreductase"/>
    <property type="match status" value="1"/>
</dbReference>
<protein>
    <recommendedName>
        <fullName evidence="1">Ribonuclease Z</fullName>
        <shortName evidence="1">RNase Z</shortName>
        <ecNumber evidence="1">3.1.26.11</ecNumber>
    </recommendedName>
    <alternativeName>
        <fullName evidence="1">tRNA 3 endonuclease</fullName>
    </alternativeName>
    <alternativeName>
        <fullName evidence="1">tRNase Z</fullName>
    </alternativeName>
</protein>
<reference key="1">
    <citation type="journal article" date="2007" name="PLoS Genet.">
        <title>Patterns and implications of gene gain and loss in the evolution of Prochlorococcus.</title>
        <authorList>
            <person name="Kettler G.C."/>
            <person name="Martiny A.C."/>
            <person name="Huang K."/>
            <person name="Zucker J."/>
            <person name="Coleman M.L."/>
            <person name="Rodrigue S."/>
            <person name="Chen F."/>
            <person name="Lapidus A."/>
            <person name="Ferriera S."/>
            <person name="Johnson J."/>
            <person name="Steglich C."/>
            <person name="Church G.M."/>
            <person name="Richardson P."/>
            <person name="Chisholm S.W."/>
        </authorList>
    </citation>
    <scope>NUCLEOTIDE SEQUENCE [LARGE SCALE GENOMIC DNA]</scope>
    <source>
        <strain>MIT 9515</strain>
    </source>
</reference>
<keyword id="KW-0255">Endonuclease</keyword>
<keyword id="KW-0378">Hydrolase</keyword>
<keyword id="KW-0479">Metal-binding</keyword>
<keyword id="KW-0540">Nuclease</keyword>
<keyword id="KW-0819">tRNA processing</keyword>
<keyword id="KW-0862">Zinc</keyword>
<gene>
    <name evidence="1" type="primary">rnz</name>
    <name type="ordered locus">P9515_15101</name>
</gene>